<sequence length="336" mass="36925">MLYRIARAGIFKLDAEKAHDLAIQNFKRFNGTPLDIFYRQNLASKPVEVMGIKFKNPVGLAAGLDKNGECIEAFGAMGFGFVEVGTVTPRPQSGNDKPRLFRLIEAEGIINRMGFNNLGVDNLVENVKKAKYDGVIGINIGKNKDTPIEKGTEDYLICMEKVYQYAGYIAVNISSPNTPGLRTLQYGEALDDLLSQLKEKQKELAEKYGKYVPVALKIAPDLEDDELTQIAESLIKYKIDGVIATNTTLDRSMVEGMKHAEEMGGLSGRPVQTRSTEVVRRLKELLGDNLPIIGVGGIDSYVAAKEKMVAGAELVQVYSGFIYKGPGLVRDIVNNI</sequence>
<accession>Q5E5B6</accession>
<gene>
    <name evidence="1" type="primary">pyrD</name>
    <name type="ordered locus">VF_1285</name>
</gene>
<evidence type="ECO:0000255" key="1">
    <source>
        <dbReference type="HAMAP-Rule" id="MF_00225"/>
    </source>
</evidence>
<reference key="1">
    <citation type="journal article" date="2005" name="Proc. Natl. Acad. Sci. U.S.A.">
        <title>Complete genome sequence of Vibrio fischeri: a symbiotic bacterium with pathogenic congeners.</title>
        <authorList>
            <person name="Ruby E.G."/>
            <person name="Urbanowski M."/>
            <person name="Campbell J."/>
            <person name="Dunn A."/>
            <person name="Faini M."/>
            <person name="Gunsalus R."/>
            <person name="Lostroh P."/>
            <person name="Lupp C."/>
            <person name="McCann J."/>
            <person name="Millikan D."/>
            <person name="Schaefer A."/>
            <person name="Stabb E."/>
            <person name="Stevens A."/>
            <person name="Visick K."/>
            <person name="Whistler C."/>
            <person name="Greenberg E.P."/>
        </authorList>
    </citation>
    <scope>NUCLEOTIDE SEQUENCE [LARGE SCALE GENOMIC DNA]</scope>
    <source>
        <strain>ATCC 700601 / ES114</strain>
    </source>
</reference>
<proteinExistence type="inferred from homology"/>
<keyword id="KW-1003">Cell membrane</keyword>
<keyword id="KW-0285">Flavoprotein</keyword>
<keyword id="KW-0288">FMN</keyword>
<keyword id="KW-0472">Membrane</keyword>
<keyword id="KW-0560">Oxidoreductase</keyword>
<keyword id="KW-0665">Pyrimidine biosynthesis</keyword>
<keyword id="KW-1185">Reference proteome</keyword>
<organism>
    <name type="scientific">Aliivibrio fischeri (strain ATCC 700601 / ES114)</name>
    <name type="common">Vibrio fischeri</name>
    <dbReference type="NCBI Taxonomy" id="312309"/>
    <lineage>
        <taxon>Bacteria</taxon>
        <taxon>Pseudomonadati</taxon>
        <taxon>Pseudomonadota</taxon>
        <taxon>Gammaproteobacteria</taxon>
        <taxon>Vibrionales</taxon>
        <taxon>Vibrionaceae</taxon>
        <taxon>Aliivibrio</taxon>
    </lineage>
</organism>
<comment type="function">
    <text evidence="1">Catalyzes the conversion of dihydroorotate to orotate with quinone as electron acceptor.</text>
</comment>
<comment type="catalytic activity">
    <reaction evidence="1">
        <text>(S)-dihydroorotate + a quinone = orotate + a quinol</text>
        <dbReference type="Rhea" id="RHEA:30187"/>
        <dbReference type="ChEBI" id="CHEBI:24646"/>
        <dbReference type="ChEBI" id="CHEBI:30839"/>
        <dbReference type="ChEBI" id="CHEBI:30864"/>
        <dbReference type="ChEBI" id="CHEBI:132124"/>
        <dbReference type="EC" id="1.3.5.2"/>
    </reaction>
</comment>
<comment type="cofactor">
    <cofactor evidence="1">
        <name>FMN</name>
        <dbReference type="ChEBI" id="CHEBI:58210"/>
    </cofactor>
    <text evidence="1">Binds 1 FMN per subunit.</text>
</comment>
<comment type="pathway">
    <text evidence="1">Pyrimidine metabolism; UMP biosynthesis via de novo pathway; orotate from (S)-dihydroorotate (quinone route): step 1/1.</text>
</comment>
<comment type="subunit">
    <text evidence="1">Monomer.</text>
</comment>
<comment type="subcellular location">
    <subcellularLocation>
        <location evidence="1">Cell membrane</location>
        <topology evidence="1">Peripheral membrane protein</topology>
    </subcellularLocation>
</comment>
<comment type="similarity">
    <text evidence="1">Belongs to the dihydroorotate dehydrogenase family. Type 2 subfamily.</text>
</comment>
<dbReference type="EC" id="1.3.5.2" evidence="1"/>
<dbReference type="EMBL" id="CP000020">
    <property type="protein sequence ID" value="AAW85780.1"/>
    <property type="molecule type" value="Genomic_DNA"/>
</dbReference>
<dbReference type="RefSeq" id="WP_011261892.1">
    <property type="nucleotide sequence ID" value="NC_006840.2"/>
</dbReference>
<dbReference type="RefSeq" id="YP_204668.1">
    <property type="nucleotide sequence ID" value="NC_006840.2"/>
</dbReference>
<dbReference type="SMR" id="Q5E5B6"/>
<dbReference type="STRING" id="312309.VF_1285"/>
<dbReference type="EnsemblBacteria" id="AAW85780">
    <property type="protein sequence ID" value="AAW85780"/>
    <property type="gene ID" value="VF_1285"/>
</dbReference>
<dbReference type="GeneID" id="54163957"/>
<dbReference type="KEGG" id="vfi:VF_1285"/>
<dbReference type="PATRIC" id="fig|312309.11.peg.1294"/>
<dbReference type="eggNOG" id="COG0167">
    <property type="taxonomic scope" value="Bacteria"/>
</dbReference>
<dbReference type="HOGENOM" id="CLU_013640_2_0_6"/>
<dbReference type="OrthoDB" id="9802377at2"/>
<dbReference type="UniPathway" id="UPA00070">
    <property type="reaction ID" value="UER00946"/>
</dbReference>
<dbReference type="Proteomes" id="UP000000537">
    <property type="component" value="Chromosome I"/>
</dbReference>
<dbReference type="GO" id="GO:0005737">
    <property type="term" value="C:cytoplasm"/>
    <property type="evidence" value="ECO:0007669"/>
    <property type="project" value="InterPro"/>
</dbReference>
<dbReference type="GO" id="GO:0005886">
    <property type="term" value="C:plasma membrane"/>
    <property type="evidence" value="ECO:0007669"/>
    <property type="project" value="UniProtKB-SubCell"/>
</dbReference>
<dbReference type="GO" id="GO:0106430">
    <property type="term" value="F:dihydroorotate dehydrogenase (quinone) activity"/>
    <property type="evidence" value="ECO:0007669"/>
    <property type="project" value="UniProtKB-EC"/>
</dbReference>
<dbReference type="GO" id="GO:0006207">
    <property type="term" value="P:'de novo' pyrimidine nucleobase biosynthetic process"/>
    <property type="evidence" value="ECO:0007669"/>
    <property type="project" value="InterPro"/>
</dbReference>
<dbReference type="GO" id="GO:0044205">
    <property type="term" value="P:'de novo' UMP biosynthetic process"/>
    <property type="evidence" value="ECO:0007669"/>
    <property type="project" value="UniProtKB-UniRule"/>
</dbReference>
<dbReference type="CDD" id="cd04738">
    <property type="entry name" value="DHOD_2_like"/>
    <property type="match status" value="1"/>
</dbReference>
<dbReference type="FunFam" id="3.20.20.70:FF:000028">
    <property type="entry name" value="Dihydroorotate dehydrogenase (quinone)"/>
    <property type="match status" value="1"/>
</dbReference>
<dbReference type="Gene3D" id="3.20.20.70">
    <property type="entry name" value="Aldolase class I"/>
    <property type="match status" value="1"/>
</dbReference>
<dbReference type="HAMAP" id="MF_00225">
    <property type="entry name" value="DHO_dh_type2"/>
    <property type="match status" value="1"/>
</dbReference>
<dbReference type="InterPro" id="IPR013785">
    <property type="entry name" value="Aldolase_TIM"/>
</dbReference>
<dbReference type="InterPro" id="IPR050074">
    <property type="entry name" value="DHO_dehydrogenase"/>
</dbReference>
<dbReference type="InterPro" id="IPR012135">
    <property type="entry name" value="Dihydroorotate_DH_1_2"/>
</dbReference>
<dbReference type="InterPro" id="IPR005719">
    <property type="entry name" value="Dihydroorotate_DH_2"/>
</dbReference>
<dbReference type="InterPro" id="IPR005720">
    <property type="entry name" value="Dihydroorotate_DH_cat"/>
</dbReference>
<dbReference type="InterPro" id="IPR001295">
    <property type="entry name" value="Dihydroorotate_DH_CS"/>
</dbReference>
<dbReference type="NCBIfam" id="NF003644">
    <property type="entry name" value="PRK05286.1-1"/>
    <property type="match status" value="1"/>
</dbReference>
<dbReference type="NCBIfam" id="NF003645">
    <property type="entry name" value="PRK05286.1-2"/>
    <property type="match status" value="1"/>
</dbReference>
<dbReference type="NCBIfam" id="NF003646">
    <property type="entry name" value="PRK05286.1-4"/>
    <property type="match status" value="1"/>
</dbReference>
<dbReference type="NCBIfam" id="NF003652">
    <property type="entry name" value="PRK05286.2-5"/>
    <property type="match status" value="1"/>
</dbReference>
<dbReference type="NCBIfam" id="TIGR01036">
    <property type="entry name" value="pyrD_sub2"/>
    <property type="match status" value="1"/>
</dbReference>
<dbReference type="PANTHER" id="PTHR48109:SF4">
    <property type="entry name" value="DIHYDROOROTATE DEHYDROGENASE (QUINONE), MITOCHONDRIAL"/>
    <property type="match status" value="1"/>
</dbReference>
<dbReference type="PANTHER" id="PTHR48109">
    <property type="entry name" value="DIHYDROOROTATE DEHYDROGENASE (QUINONE), MITOCHONDRIAL-RELATED"/>
    <property type="match status" value="1"/>
</dbReference>
<dbReference type="Pfam" id="PF01180">
    <property type="entry name" value="DHO_dh"/>
    <property type="match status" value="1"/>
</dbReference>
<dbReference type="PIRSF" id="PIRSF000164">
    <property type="entry name" value="DHO_oxidase"/>
    <property type="match status" value="1"/>
</dbReference>
<dbReference type="SUPFAM" id="SSF51395">
    <property type="entry name" value="FMN-linked oxidoreductases"/>
    <property type="match status" value="1"/>
</dbReference>
<dbReference type="PROSITE" id="PS00911">
    <property type="entry name" value="DHODEHASE_1"/>
    <property type="match status" value="1"/>
</dbReference>
<dbReference type="PROSITE" id="PS00912">
    <property type="entry name" value="DHODEHASE_2"/>
    <property type="match status" value="1"/>
</dbReference>
<name>PYRD_ALIF1</name>
<feature type="chain" id="PRO_0000148485" description="Dihydroorotate dehydrogenase (quinone)">
    <location>
        <begin position="1"/>
        <end position="336"/>
    </location>
</feature>
<feature type="active site" description="Nucleophile" evidence="1">
    <location>
        <position position="175"/>
    </location>
</feature>
<feature type="binding site" evidence="1">
    <location>
        <begin position="62"/>
        <end position="66"/>
    </location>
    <ligand>
        <name>FMN</name>
        <dbReference type="ChEBI" id="CHEBI:58210"/>
    </ligand>
</feature>
<feature type="binding site" evidence="1">
    <location>
        <position position="66"/>
    </location>
    <ligand>
        <name>substrate</name>
    </ligand>
</feature>
<feature type="binding site" evidence="1">
    <location>
        <position position="86"/>
    </location>
    <ligand>
        <name>FMN</name>
        <dbReference type="ChEBI" id="CHEBI:58210"/>
    </ligand>
</feature>
<feature type="binding site" evidence="1">
    <location>
        <begin position="111"/>
        <end position="115"/>
    </location>
    <ligand>
        <name>substrate</name>
    </ligand>
</feature>
<feature type="binding site" evidence="1">
    <location>
        <position position="139"/>
    </location>
    <ligand>
        <name>FMN</name>
        <dbReference type="ChEBI" id="CHEBI:58210"/>
    </ligand>
</feature>
<feature type="binding site" evidence="1">
    <location>
        <position position="172"/>
    </location>
    <ligand>
        <name>FMN</name>
        <dbReference type="ChEBI" id="CHEBI:58210"/>
    </ligand>
</feature>
<feature type="binding site" evidence="1">
    <location>
        <position position="172"/>
    </location>
    <ligand>
        <name>substrate</name>
    </ligand>
</feature>
<feature type="binding site" evidence="1">
    <location>
        <position position="177"/>
    </location>
    <ligand>
        <name>substrate</name>
    </ligand>
</feature>
<feature type="binding site" evidence="1">
    <location>
        <position position="217"/>
    </location>
    <ligand>
        <name>FMN</name>
        <dbReference type="ChEBI" id="CHEBI:58210"/>
    </ligand>
</feature>
<feature type="binding site" evidence="1">
    <location>
        <position position="245"/>
    </location>
    <ligand>
        <name>FMN</name>
        <dbReference type="ChEBI" id="CHEBI:58210"/>
    </ligand>
</feature>
<feature type="binding site" evidence="1">
    <location>
        <begin position="246"/>
        <end position="247"/>
    </location>
    <ligand>
        <name>substrate</name>
    </ligand>
</feature>
<feature type="binding site" evidence="1">
    <location>
        <position position="268"/>
    </location>
    <ligand>
        <name>FMN</name>
        <dbReference type="ChEBI" id="CHEBI:58210"/>
    </ligand>
</feature>
<feature type="binding site" evidence="1">
    <location>
        <position position="297"/>
    </location>
    <ligand>
        <name>FMN</name>
        <dbReference type="ChEBI" id="CHEBI:58210"/>
    </ligand>
</feature>
<feature type="binding site" evidence="1">
    <location>
        <begin position="318"/>
        <end position="319"/>
    </location>
    <ligand>
        <name>FMN</name>
        <dbReference type="ChEBI" id="CHEBI:58210"/>
    </ligand>
</feature>
<protein>
    <recommendedName>
        <fullName evidence="1">Dihydroorotate dehydrogenase (quinone)</fullName>
        <ecNumber evidence="1">1.3.5.2</ecNumber>
    </recommendedName>
    <alternativeName>
        <fullName evidence="1">DHOdehase</fullName>
        <shortName evidence="1">DHOD</shortName>
        <shortName evidence="1">DHODase</shortName>
    </alternativeName>
    <alternativeName>
        <fullName evidence="1">Dihydroorotate oxidase</fullName>
    </alternativeName>
</protein>